<protein>
    <recommendedName>
        <fullName evidence="1">Glycerol-3-phosphate dehydrogenase [NAD(P)+]</fullName>
        <ecNumber evidence="1">1.1.1.94</ecNumber>
    </recommendedName>
    <alternativeName>
        <fullName evidence="1">NAD(P)(+)-dependent glycerol-3-phosphate dehydrogenase</fullName>
    </alternativeName>
    <alternativeName>
        <fullName evidence="1">NAD(P)H-dependent dihydroxyacetone-phosphate reductase</fullName>
    </alternativeName>
</protein>
<dbReference type="EC" id="1.1.1.94" evidence="1"/>
<dbReference type="EMBL" id="CP001124">
    <property type="protein sequence ID" value="ACH37039.1"/>
    <property type="molecule type" value="Genomic_DNA"/>
</dbReference>
<dbReference type="RefSeq" id="WP_012528449.1">
    <property type="nucleotide sequence ID" value="NC_011146.1"/>
</dbReference>
<dbReference type="SMR" id="B5E7Q3"/>
<dbReference type="STRING" id="404380.Gbem_0008"/>
<dbReference type="KEGG" id="gbm:Gbem_0008"/>
<dbReference type="eggNOG" id="COG0240">
    <property type="taxonomic scope" value="Bacteria"/>
</dbReference>
<dbReference type="HOGENOM" id="CLU_033449_0_2_7"/>
<dbReference type="OrthoDB" id="9812273at2"/>
<dbReference type="UniPathway" id="UPA00940"/>
<dbReference type="Proteomes" id="UP000008825">
    <property type="component" value="Chromosome"/>
</dbReference>
<dbReference type="GO" id="GO:0005829">
    <property type="term" value="C:cytosol"/>
    <property type="evidence" value="ECO:0007669"/>
    <property type="project" value="TreeGrafter"/>
</dbReference>
<dbReference type="GO" id="GO:0047952">
    <property type="term" value="F:glycerol-3-phosphate dehydrogenase [NAD(P)+] activity"/>
    <property type="evidence" value="ECO:0007669"/>
    <property type="project" value="UniProtKB-UniRule"/>
</dbReference>
<dbReference type="GO" id="GO:0051287">
    <property type="term" value="F:NAD binding"/>
    <property type="evidence" value="ECO:0007669"/>
    <property type="project" value="InterPro"/>
</dbReference>
<dbReference type="GO" id="GO:0005975">
    <property type="term" value="P:carbohydrate metabolic process"/>
    <property type="evidence" value="ECO:0007669"/>
    <property type="project" value="InterPro"/>
</dbReference>
<dbReference type="GO" id="GO:0046167">
    <property type="term" value="P:glycerol-3-phosphate biosynthetic process"/>
    <property type="evidence" value="ECO:0007669"/>
    <property type="project" value="UniProtKB-UniRule"/>
</dbReference>
<dbReference type="GO" id="GO:0046168">
    <property type="term" value="P:glycerol-3-phosphate catabolic process"/>
    <property type="evidence" value="ECO:0007669"/>
    <property type="project" value="InterPro"/>
</dbReference>
<dbReference type="GO" id="GO:0006650">
    <property type="term" value="P:glycerophospholipid metabolic process"/>
    <property type="evidence" value="ECO:0007669"/>
    <property type="project" value="UniProtKB-UniRule"/>
</dbReference>
<dbReference type="GO" id="GO:0008654">
    <property type="term" value="P:phospholipid biosynthetic process"/>
    <property type="evidence" value="ECO:0007669"/>
    <property type="project" value="UniProtKB-KW"/>
</dbReference>
<dbReference type="FunFam" id="1.10.1040.10:FF:000001">
    <property type="entry name" value="Glycerol-3-phosphate dehydrogenase [NAD(P)+]"/>
    <property type="match status" value="1"/>
</dbReference>
<dbReference type="FunFam" id="3.40.50.720:FF:000019">
    <property type="entry name" value="Glycerol-3-phosphate dehydrogenase [NAD(P)+]"/>
    <property type="match status" value="1"/>
</dbReference>
<dbReference type="Gene3D" id="1.10.1040.10">
    <property type="entry name" value="N-(1-d-carboxylethyl)-l-norvaline Dehydrogenase, domain 2"/>
    <property type="match status" value="1"/>
</dbReference>
<dbReference type="Gene3D" id="3.40.50.720">
    <property type="entry name" value="NAD(P)-binding Rossmann-like Domain"/>
    <property type="match status" value="1"/>
</dbReference>
<dbReference type="HAMAP" id="MF_00394">
    <property type="entry name" value="NAD_Glyc3P_dehydrog"/>
    <property type="match status" value="1"/>
</dbReference>
<dbReference type="InterPro" id="IPR008927">
    <property type="entry name" value="6-PGluconate_DH-like_C_sf"/>
</dbReference>
<dbReference type="InterPro" id="IPR013328">
    <property type="entry name" value="6PGD_dom2"/>
</dbReference>
<dbReference type="InterPro" id="IPR006168">
    <property type="entry name" value="G3P_DH_NAD-dep"/>
</dbReference>
<dbReference type="InterPro" id="IPR006109">
    <property type="entry name" value="G3P_DH_NAD-dep_C"/>
</dbReference>
<dbReference type="InterPro" id="IPR011128">
    <property type="entry name" value="G3P_DH_NAD-dep_N"/>
</dbReference>
<dbReference type="InterPro" id="IPR036291">
    <property type="entry name" value="NAD(P)-bd_dom_sf"/>
</dbReference>
<dbReference type="NCBIfam" id="NF000940">
    <property type="entry name" value="PRK00094.1-2"/>
    <property type="match status" value="1"/>
</dbReference>
<dbReference type="NCBIfam" id="NF000941">
    <property type="entry name" value="PRK00094.1-3"/>
    <property type="match status" value="1"/>
</dbReference>
<dbReference type="NCBIfam" id="NF000942">
    <property type="entry name" value="PRK00094.1-4"/>
    <property type="match status" value="1"/>
</dbReference>
<dbReference type="PANTHER" id="PTHR11728">
    <property type="entry name" value="GLYCEROL-3-PHOSPHATE DEHYDROGENASE"/>
    <property type="match status" value="1"/>
</dbReference>
<dbReference type="PANTHER" id="PTHR11728:SF1">
    <property type="entry name" value="GLYCEROL-3-PHOSPHATE DEHYDROGENASE [NAD(+)] 2, CHLOROPLASTIC"/>
    <property type="match status" value="1"/>
</dbReference>
<dbReference type="Pfam" id="PF07479">
    <property type="entry name" value="NAD_Gly3P_dh_C"/>
    <property type="match status" value="1"/>
</dbReference>
<dbReference type="Pfam" id="PF01210">
    <property type="entry name" value="NAD_Gly3P_dh_N"/>
    <property type="match status" value="1"/>
</dbReference>
<dbReference type="PIRSF" id="PIRSF000114">
    <property type="entry name" value="Glycerol-3-P_dh"/>
    <property type="match status" value="1"/>
</dbReference>
<dbReference type="PRINTS" id="PR00077">
    <property type="entry name" value="GPDHDRGNASE"/>
</dbReference>
<dbReference type="SUPFAM" id="SSF48179">
    <property type="entry name" value="6-phosphogluconate dehydrogenase C-terminal domain-like"/>
    <property type="match status" value="1"/>
</dbReference>
<dbReference type="SUPFAM" id="SSF51735">
    <property type="entry name" value="NAD(P)-binding Rossmann-fold domains"/>
    <property type="match status" value="1"/>
</dbReference>
<dbReference type="PROSITE" id="PS00957">
    <property type="entry name" value="NAD_G3PDH"/>
    <property type="match status" value="1"/>
</dbReference>
<proteinExistence type="inferred from homology"/>
<evidence type="ECO:0000255" key="1">
    <source>
        <dbReference type="HAMAP-Rule" id="MF_00394"/>
    </source>
</evidence>
<organism>
    <name type="scientific">Citrifermentans bemidjiense (strain ATCC BAA-1014 / DSM 16622 / JCM 12645 / Bem)</name>
    <name type="common">Geobacter bemidjiensis</name>
    <dbReference type="NCBI Taxonomy" id="404380"/>
    <lineage>
        <taxon>Bacteria</taxon>
        <taxon>Pseudomonadati</taxon>
        <taxon>Thermodesulfobacteriota</taxon>
        <taxon>Desulfuromonadia</taxon>
        <taxon>Geobacterales</taxon>
        <taxon>Geobacteraceae</taxon>
        <taxon>Citrifermentans</taxon>
    </lineage>
</organism>
<feature type="chain" id="PRO_1000190153" description="Glycerol-3-phosphate dehydrogenase [NAD(P)+]">
    <location>
        <begin position="1"/>
        <end position="335"/>
    </location>
</feature>
<feature type="active site" description="Proton acceptor" evidence="1">
    <location>
        <position position="193"/>
    </location>
</feature>
<feature type="binding site" evidence="1">
    <location>
        <position position="12"/>
    </location>
    <ligand>
        <name>NADPH</name>
        <dbReference type="ChEBI" id="CHEBI:57783"/>
    </ligand>
</feature>
<feature type="binding site" evidence="1">
    <location>
        <position position="13"/>
    </location>
    <ligand>
        <name>NADPH</name>
        <dbReference type="ChEBI" id="CHEBI:57783"/>
    </ligand>
</feature>
<feature type="binding site" evidence="1">
    <location>
        <position position="107"/>
    </location>
    <ligand>
        <name>NADPH</name>
        <dbReference type="ChEBI" id="CHEBI:57783"/>
    </ligand>
</feature>
<feature type="binding site" evidence="1">
    <location>
        <position position="107"/>
    </location>
    <ligand>
        <name>sn-glycerol 3-phosphate</name>
        <dbReference type="ChEBI" id="CHEBI:57597"/>
    </ligand>
</feature>
<feature type="binding site" evidence="1">
    <location>
        <position position="138"/>
    </location>
    <ligand>
        <name>sn-glycerol 3-phosphate</name>
        <dbReference type="ChEBI" id="CHEBI:57597"/>
    </ligand>
</feature>
<feature type="binding site" evidence="1">
    <location>
        <position position="140"/>
    </location>
    <ligand>
        <name>sn-glycerol 3-phosphate</name>
        <dbReference type="ChEBI" id="CHEBI:57597"/>
    </ligand>
</feature>
<feature type="binding site" evidence="1">
    <location>
        <position position="142"/>
    </location>
    <ligand>
        <name>NADPH</name>
        <dbReference type="ChEBI" id="CHEBI:57783"/>
    </ligand>
</feature>
<feature type="binding site" evidence="1">
    <location>
        <position position="193"/>
    </location>
    <ligand>
        <name>sn-glycerol 3-phosphate</name>
        <dbReference type="ChEBI" id="CHEBI:57597"/>
    </ligand>
</feature>
<feature type="binding site" evidence="1">
    <location>
        <position position="246"/>
    </location>
    <ligand>
        <name>sn-glycerol 3-phosphate</name>
        <dbReference type="ChEBI" id="CHEBI:57597"/>
    </ligand>
</feature>
<feature type="binding site" evidence="1">
    <location>
        <position position="256"/>
    </location>
    <ligand>
        <name>sn-glycerol 3-phosphate</name>
        <dbReference type="ChEBI" id="CHEBI:57597"/>
    </ligand>
</feature>
<feature type="binding site" evidence="1">
    <location>
        <position position="257"/>
    </location>
    <ligand>
        <name>NADPH</name>
        <dbReference type="ChEBI" id="CHEBI:57783"/>
    </ligand>
</feature>
<feature type="binding site" evidence="1">
    <location>
        <position position="257"/>
    </location>
    <ligand>
        <name>sn-glycerol 3-phosphate</name>
        <dbReference type="ChEBI" id="CHEBI:57597"/>
    </ligand>
</feature>
<feature type="binding site" evidence="1">
    <location>
        <position position="258"/>
    </location>
    <ligand>
        <name>sn-glycerol 3-phosphate</name>
        <dbReference type="ChEBI" id="CHEBI:57597"/>
    </ligand>
</feature>
<feature type="binding site" evidence="1">
    <location>
        <position position="281"/>
    </location>
    <ligand>
        <name>NADPH</name>
        <dbReference type="ChEBI" id="CHEBI:57783"/>
    </ligand>
</feature>
<feature type="binding site" evidence="1">
    <location>
        <position position="283"/>
    </location>
    <ligand>
        <name>NADPH</name>
        <dbReference type="ChEBI" id="CHEBI:57783"/>
    </ligand>
</feature>
<gene>
    <name evidence="1" type="primary">gpsA</name>
    <name type="ordered locus">Gbem_0008</name>
</gene>
<comment type="function">
    <text evidence="1">Catalyzes the reduction of the glycolytic intermediate dihydroxyacetone phosphate (DHAP) to sn-glycerol 3-phosphate (G3P), the key precursor for phospholipid synthesis.</text>
</comment>
<comment type="catalytic activity">
    <reaction evidence="1">
        <text>sn-glycerol 3-phosphate + NAD(+) = dihydroxyacetone phosphate + NADH + H(+)</text>
        <dbReference type="Rhea" id="RHEA:11092"/>
        <dbReference type="ChEBI" id="CHEBI:15378"/>
        <dbReference type="ChEBI" id="CHEBI:57540"/>
        <dbReference type="ChEBI" id="CHEBI:57597"/>
        <dbReference type="ChEBI" id="CHEBI:57642"/>
        <dbReference type="ChEBI" id="CHEBI:57945"/>
        <dbReference type="EC" id="1.1.1.94"/>
    </reaction>
    <physiologicalReaction direction="right-to-left" evidence="1">
        <dbReference type="Rhea" id="RHEA:11094"/>
    </physiologicalReaction>
</comment>
<comment type="catalytic activity">
    <reaction evidence="1">
        <text>sn-glycerol 3-phosphate + NADP(+) = dihydroxyacetone phosphate + NADPH + H(+)</text>
        <dbReference type="Rhea" id="RHEA:11096"/>
        <dbReference type="ChEBI" id="CHEBI:15378"/>
        <dbReference type="ChEBI" id="CHEBI:57597"/>
        <dbReference type="ChEBI" id="CHEBI:57642"/>
        <dbReference type="ChEBI" id="CHEBI:57783"/>
        <dbReference type="ChEBI" id="CHEBI:58349"/>
        <dbReference type="EC" id="1.1.1.94"/>
    </reaction>
    <physiologicalReaction direction="right-to-left" evidence="1">
        <dbReference type="Rhea" id="RHEA:11098"/>
    </physiologicalReaction>
</comment>
<comment type="pathway">
    <text evidence="1">Membrane lipid metabolism; glycerophospholipid metabolism.</text>
</comment>
<comment type="subcellular location">
    <subcellularLocation>
        <location evidence="1">Cytoplasm</location>
    </subcellularLocation>
</comment>
<comment type="similarity">
    <text evidence="1">Belongs to the NAD-dependent glycerol-3-phosphate dehydrogenase family.</text>
</comment>
<sequence length="335" mass="36012">MAEKIAVIGAGSWGTTLADLLAKKGHEVTLWAYEPELVLEMRDNRENSLFLPGIKLNERLAFTNDLAEAYRGCSMVLCVVPSQLVRRVMTNSLPFLPKEAIIVSASKGIEVDTLATVSEIYQEILPPEQFQVLAALSGPSFAREVALEMPTAVTAAASSEAVARRVQEAFTTDYFRVYRNSDVVGVELGGAIKNVIAIAAGISDGLGFGSNTRAALITRGLAEMTRLGVAMGAQPSTFAGLAGMGDLVLTCTGDLSRNRSVGIQIGQGRTLSEILGEMRMVAEGVKTTESAYNLAKKLGVEMPIIEQMYQMLYQNKSAREAVLELMTRNLKAEGV</sequence>
<reference key="1">
    <citation type="submission" date="2008-07" db="EMBL/GenBank/DDBJ databases">
        <title>Complete sequence of Geobacter bemidjiensis BEM.</title>
        <authorList>
            <consortium name="US DOE Joint Genome Institute"/>
            <person name="Lucas S."/>
            <person name="Copeland A."/>
            <person name="Lapidus A."/>
            <person name="Glavina del Rio T."/>
            <person name="Dalin E."/>
            <person name="Tice H."/>
            <person name="Bruce D."/>
            <person name="Goodwin L."/>
            <person name="Pitluck S."/>
            <person name="Kiss H."/>
            <person name="Brettin T."/>
            <person name="Detter J.C."/>
            <person name="Han C."/>
            <person name="Kuske C.R."/>
            <person name="Schmutz J."/>
            <person name="Larimer F."/>
            <person name="Land M."/>
            <person name="Hauser L."/>
            <person name="Kyrpides N."/>
            <person name="Lykidis A."/>
            <person name="Lovley D."/>
            <person name="Richardson P."/>
        </authorList>
    </citation>
    <scope>NUCLEOTIDE SEQUENCE [LARGE SCALE GENOMIC DNA]</scope>
    <source>
        <strain>ATCC BAA-1014 / DSM 16622 / JCM 12645 / Bem</strain>
    </source>
</reference>
<keyword id="KW-0963">Cytoplasm</keyword>
<keyword id="KW-0444">Lipid biosynthesis</keyword>
<keyword id="KW-0443">Lipid metabolism</keyword>
<keyword id="KW-0520">NAD</keyword>
<keyword id="KW-0521">NADP</keyword>
<keyword id="KW-0547">Nucleotide-binding</keyword>
<keyword id="KW-0560">Oxidoreductase</keyword>
<keyword id="KW-0594">Phospholipid biosynthesis</keyword>
<keyword id="KW-1208">Phospholipid metabolism</keyword>
<keyword id="KW-1185">Reference proteome</keyword>
<accession>B5E7Q3</accession>
<name>GPDA_CITBB</name>